<comment type="function">
    <text evidence="1">Binds directly to 23S rRNA. The L1 stalk is quite mobile in the ribosome, and is involved in E site tRNA release.</text>
</comment>
<comment type="function">
    <text evidence="1">Protein L1 is also a translational repressor protein, it controls the translation of the L11 operon by binding to its mRNA.</text>
</comment>
<comment type="subunit">
    <text evidence="1">Part of the 50S ribosomal subunit.</text>
</comment>
<comment type="similarity">
    <text evidence="1">Belongs to the universal ribosomal protein uL1 family.</text>
</comment>
<accession>A9N0I9</accession>
<proteinExistence type="inferred from homology"/>
<name>RL1_SALPB</name>
<keyword id="KW-0678">Repressor</keyword>
<keyword id="KW-0687">Ribonucleoprotein</keyword>
<keyword id="KW-0689">Ribosomal protein</keyword>
<keyword id="KW-0694">RNA-binding</keyword>
<keyword id="KW-0699">rRNA-binding</keyword>
<keyword id="KW-0810">Translation regulation</keyword>
<keyword id="KW-0820">tRNA-binding</keyword>
<evidence type="ECO:0000255" key="1">
    <source>
        <dbReference type="HAMAP-Rule" id="MF_01318"/>
    </source>
</evidence>
<evidence type="ECO:0000305" key="2"/>
<sequence length="234" mass="24729">MAKLTKRMRVIREKVDATKQYDINEAIALLKELATAKFNESVDVAVNLGIDARKSDQNVRGATVLPHGTGRSVRVAVFTQGPNAEAAKAAGAELVGMEDLADQIKKGEMNFDVVIASPDAMRVVGQLGQVLGPRGLMPNPKVGTVTPNVAEAVKNAKAGQVRYRNDKNGIIHTTIGKVDFDADKLKENLEALLVALKKAKPSQAKGVYIKKVSISTTMGAGVAVDQAGLSASAN</sequence>
<feature type="chain" id="PRO_1000086303" description="Large ribosomal subunit protein uL1">
    <location>
        <begin position="1"/>
        <end position="234"/>
    </location>
</feature>
<reference key="1">
    <citation type="submission" date="2007-11" db="EMBL/GenBank/DDBJ databases">
        <authorList>
            <consortium name="The Salmonella enterica serovar Paratyphi B Genome Sequencing Project"/>
            <person name="McClelland M."/>
            <person name="Sanderson E.K."/>
            <person name="Porwollik S."/>
            <person name="Spieth J."/>
            <person name="Clifton W.S."/>
            <person name="Fulton R."/>
            <person name="Cordes M."/>
            <person name="Wollam A."/>
            <person name="Shah N."/>
            <person name="Pepin K."/>
            <person name="Bhonagiri V."/>
            <person name="Nash W."/>
            <person name="Johnson M."/>
            <person name="Thiruvilangam P."/>
            <person name="Wilson R."/>
        </authorList>
    </citation>
    <scope>NUCLEOTIDE SEQUENCE [LARGE SCALE GENOMIC DNA]</scope>
    <source>
        <strain>ATCC BAA-1250 / SPB7</strain>
    </source>
</reference>
<protein>
    <recommendedName>
        <fullName evidence="1">Large ribosomal subunit protein uL1</fullName>
    </recommendedName>
    <alternativeName>
        <fullName evidence="2">50S ribosomal protein L1</fullName>
    </alternativeName>
</protein>
<organism>
    <name type="scientific">Salmonella paratyphi B (strain ATCC BAA-1250 / SPB7)</name>
    <dbReference type="NCBI Taxonomy" id="1016998"/>
    <lineage>
        <taxon>Bacteria</taxon>
        <taxon>Pseudomonadati</taxon>
        <taxon>Pseudomonadota</taxon>
        <taxon>Gammaproteobacteria</taxon>
        <taxon>Enterobacterales</taxon>
        <taxon>Enterobacteriaceae</taxon>
        <taxon>Salmonella</taxon>
    </lineage>
</organism>
<dbReference type="EMBL" id="CP000886">
    <property type="protein sequence ID" value="ABX70418.1"/>
    <property type="molecule type" value="Genomic_DNA"/>
</dbReference>
<dbReference type="RefSeq" id="WP_001096676.1">
    <property type="nucleotide sequence ID" value="NC_010102.1"/>
</dbReference>
<dbReference type="SMR" id="A9N0I9"/>
<dbReference type="KEGG" id="spq:SPAB_05137"/>
<dbReference type="PATRIC" id="fig|1016998.12.peg.4814"/>
<dbReference type="HOGENOM" id="CLU_062853_0_0_6"/>
<dbReference type="BioCyc" id="SENT1016998:SPAB_RS20910-MONOMER"/>
<dbReference type="Proteomes" id="UP000008556">
    <property type="component" value="Chromosome"/>
</dbReference>
<dbReference type="GO" id="GO:0022625">
    <property type="term" value="C:cytosolic large ribosomal subunit"/>
    <property type="evidence" value="ECO:0007669"/>
    <property type="project" value="TreeGrafter"/>
</dbReference>
<dbReference type="GO" id="GO:0019843">
    <property type="term" value="F:rRNA binding"/>
    <property type="evidence" value="ECO:0007669"/>
    <property type="project" value="UniProtKB-UniRule"/>
</dbReference>
<dbReference type="GO" id="GO:0003735">
    <property type="term" value="F:structural constituent of ribosome"/>
    <property type="evidence" value="ECO:0007669"/>
    <property type="project" value="InterPro"/>
</dbReference>
<dbReference type="GO" id="GO:0000049">
    <property type="term" value="F:tRNA binding"/>
    <property type="evidence" value="ECO:0007669"/>
    <property type="project" value="UniProtKB-KW"/>
</dbReference>
<dbReference type="GO" id="GO:0006417">
    <property type="term" value="P:regulation of translation"/>
    <property type="evidence" value="ECO:0007669"/>
    <property type="project" value="UniProtKB-KW"/>
</dbReference>
<dbReference type="GO" id="GO:0006412">
    <property type="term" value="P:translation"/>
    <property type="evidence" value="ECO:0007669"/>
    <property type="project" value="UniProtKB-UniRule"/>
</dbReference>
<dbReference type="CDD" id="cd00403">
    <property type="entry name" value="Ribosomal_L1"/>
    <property type="match status" value="1"/>
</dbReference>
<dbReference type="FunFam" id="3.40.50.790:FF:000001">
    <property type="entry name" value="50S ribosomal protein L1"/>
    <property type="match status" value="1"/>
</dbReference>
<dbReference type="Gene3D" id="3.30.190.20">
    <property type="match status" value="1"/>
</dbReference>
<dbReference type="Gene3D" id="3.40.50.790">
    <property type="match status" value="1"/>
</dbReference>
<dbReference type="HAMAP" id="MF_01318_B">
    <property type="entry name" value="Ribosomal_uL1_B"/>
    <property type="match status" value="1"/>
</dbReference>
<dbReference type="InterPro" id="IPR005878">
    <property type="entry name" value="Ribosom_uL1_bac-type"/>
</dbReference>
<dbReference type="InterPro" id="IPR002143">
    <property type="entry name" value="Ribosomal_uL1"/>
</dbReference>
<dbReference type="InterPro" id="IPR023674">
    <property type="entry name" value="Ribosomal_uL1-like"/>
</dbReference>
<dbReference type="InterPro" id="IPR028364">
    <property type="entry name" value="Ribosomal_uL1/biogenesis"/>
</dbReference>
<dbReference type="InterPro" id="IPR016095">
    <property type="entry name" value="Ribosomal_uL1_3-a/b-sand"/>
</dbReference>
<dbReference type="InterPro" id="IPR023673">
    <property type="entry name" value="Ribosomal_uL1_CS"/>
</dbReference>
<dbReference type="NCBIfam" id="TIGR01169">
    <property type="entry name" value="rplA_bact"/>
    <property type="match status" value="1"/>
</dbReference>
<dbReference type="PANTHER" id="PTHR36427">
    <property type="entry name" value="54S RIBOSOMAL PROTEIN L1, MITOCHONDRIAL"/>
    <property type="match status" value="1"/>
</dbReference>
<dbReference type="PANTHER" id="PTHR36427:SF3">
    <property type="entry name" value="LARGE RIBOSOMAL SUBUNIT PROTEIN UL1M"/>
    <property type="match status" value="1"/>
</dbReference>
<dbReference type="Pfam" id="PF00687">
    <property type="entry name" value="Ribosomal_L1"/>
    <property type="match status" value="1"/>
</dbReference>
<dbReference type="PIRSF" id="PIRSF002155">
    <property type="entry name" value="Ribosomal_L1"/>
    <property type="match status" value="1"/>
</dbReference>
<dbReference type="SUPFAM" id="SSF56808">
    <property type="entry name" value="Ribosomal protein L1"/>
    <property type="match status" value="1"/>
</dbReference>
<dbReference type="PROSITE" id="PS01199">
    <property type="entry name" value="RIBOSOMAL_L1"/>
    <property type="match status" value="1"/>
</dbReference>
<gene>
    <name evidence="1" type="primary">rplA</name>
    <name type="ordered locus">SPAB_05137</name>
</gene>